<organism>
    <name type="scientific">Leptospira borgpetersenii</name>
    <dbReference type="NCBI Taxonomy" id="174"/>
    <lineage>
        <taxon>Bacteria</taxon>
        <taxon>Pseudomonadati</taxon>
        <taxon>Spirochaetota</taxon>
        <taxon>Spirochaetia</taxon>
        <taxon>Leptospirales</taxon>
        <taxon>Leptospiraceae</taxon>
        <taxon>Leptospira</taxon>
    </lineage>
</organism>
<accession>Q8GQU1</accession>
<dbReference type="EC" id="3.4.25.2" evidence="1"/>
<dbReference type="EMBL" id="AF270500">
    <property type="protein sequence ID" value="AAN75635.1"/>
    <property type="molecule type" value="Genomic_DNA"/>
</dbReference>
<dbReference type="RefSeq" id="WP_011670162.1">
    <property type="nucleotide sequence ID" value="NZ_VCHK01000007.1"/>
</dbReference>
<dbReference type="SMR" id="Q8GQU1"/>
<dbReference type="MEROPS" id="T01.006"/>
<dbReference type="OMA" id="WRTDKML"/>
<dbReference type="GO" id="GO:0009376">
    <property type="term" value="C:HslUV protease complex"/>
    <property type="evidence" value="ECO:0007669"/>
    <property type="project" value="UniProtKB-UniRule"/>
</dbReference>
<dbReference type="GO" id="GO:0005839">
    <property type="term" value="C:proteasome core complex"/>
    <property type="evidence" value="ECO:0007669"/>
    <property type="project" value="InterPro"/>
</dbReference>
<dbReference type="GO" id="GO:0046872">
    <property type="term" value="F:metal ion binding"/>
    <property type="evidence" value="ECO:0007669"/>
    <property type="project" value="UniProtKB-KW"/>
</dbReference>
<dbReference type="GO" id="GO:0004298">
    <property type="term" value="F:threonine-type endopeptidase activity"/>
    <property type="evidence" value="ECO:0007669"/>
    <property type="project" value="UniProtKB-KW"/>
</dbReference>
<dbReference type="GO" id="GO:0051603">
    <property type="term" value="P:proteolysis involved in protein catabolic process"/>
    <property type="evidence" value="ECO:0007669"/>
    <property type="project" value="InterPro"/>
</dbReference>
<dbReference type="CDD" id="cd01913">
    <property type="entry name" value="protease_HslV"/>
    <property type="match status" value="1"/>
</dbReference>
<dbReference type="FunFam" id="3.60.20.10:FF:000002">
    <property type="entry name" value="ATP-dependent protease subunit HslV"/>
    <property type="match status" value="1"/>
</dbReference>
<dbReference type="Gene3D" id="3.60.20.10">
    <property type="entry name" value="Glutamine Phosphoribosylpyrophosphate, subunit 1, domain 1"/>
    <property type="match status" value="1"/>
</dbReference>
<dbReference type="HAMAP" id="MF_00248">
    <property type="entry name" value="HslV"/>
    <property type="match status" value="1"/>
</dbReference>
<dbReference type="InterPro" id="IPR022281">
    <property type="entry name" value="ATP-dep_Prtase_HsIV_su"/>
</dbReference>
<dbReference type="InterPro" id="IPR029055">
    <property type="entry name" value="Ntn_hydrolases_N"/>
</dbReference>
<dbReference type="InterPro" id="IPR001353">
    <property type="entry name" value="Proteasome_sua/b"/>
</dbReference>
<dbReference type="InterPro" id="IPR023333">
    <property type="entry name" value="Proteasome_suB-type"/>
</dbReference>
<dbReference type="NCBIfam" id="TIGR03692">
    <property type="entry name" value="ATP_dep_HslV"/>
    <property type="match status" value="1"/>
</dbReference>
<dbReference type="NCBIfam" id="NF003964">
    <property type="entry name" value="PRK05456.1"/>
    <property type="match status" value="1"/>
</dbReference>
<dbReference type="PANTHER" id="PTHR32194:SF0">
    <property type="entry name" value="ATP-DEPENDENT PROTEASE SUBUNIT HSLV"/>
    <property type="match status" value="1"/>
</dbReference>
<dbReference type="PANTHER" id="PTHR32194">
    <property type="entry name" value="METALLOPROTEASE TLDD"/>
    <property type="match status" value="1"/>
</dbReference>
<dbReference type="Pfam" id="PF00227">
    <property type="entry name" value="Proteasome"/>
    <property type="match status" value="1"/>
</dbReference>
<dbReference type="PIRSF" id="PIRSF039093">
    <property type="entry name" value="HslV"/>
    <property type="match status" value="1"/>
</dbReference>
<dbReference type="SUPFAM" id="SSF56235">
    <property type="entry name" value="N-terminal nucleophile aminohydrolases (Ntn hydrolases)"/>
    <property type="match status" value="1"/>
</dbReference>
<dbReference type="PROSITE" id="PS51476">
    <property type="entry name" value="PROTEASOME_BETA_2"/>
    <property type="match status" value="1"/>
</dbReference>
<keyword id="KW-0021">Allosteric enzyme</keyword>
<keyword id="KW-0963">Cytoplasm</keyword>
<keyword id="KW-0378">Hydrolase</keyword>
<keyword id="KW-0479">Metal-binding</keyword>
<keyword id="KW-0645">Protease</keyword>
<keyword id="KW-0915">Sodium</keyword>
<keyword id="KW-0346">Stress response</keyword>
<keyword id="KW-0888">Threonine protease</keyword>
<reference key="1">
    <citation type="journal article" date="2001" name="Curr. Microbiol.">
        <title>PCR genome walking identifies a genetic locus comprising two heat shock genes (hslV and hslU) from Leptospira borgpetersenii serovar hardjobovis.</title>
        <authorList>
            <person name="Lin M."/>
            <person name="Li Y."/>
        </authorList>
    </citation>
    <scope>NUCLEOTIDE SEQUENCE [GENOMIC DNA]</scope>
    <source>
        <strain>Serovar Hardjobovis</strain>
    </source>
</reference>
<name>HSLV_LEPBO</name>
<gene>
    <name evidence="1" type="primary">hslV</name>
</gene>
<comment type="function">
    <text evidence="1">Protease subunit of a proteasome-like degradation complex believed to be a general protein degrading machinery.</text>
</comment>
<comment type="catalytic activity">
    <reaction evidence="1">
        <text>ATP-dependent cleavage of peptide bonds with broad specificity.</text>
        <dbReference type="EC" id="3.4.25.2"/>
    </reaction>
</comment>
<comment type="activity regulation">
    <text evidence="1">Allosterically activated by HslU binding.</text>
</comment>
<comment type="subunit">
    <text evidence="1">A double ring-shaped homohexamer of HslV is capped on each side by a ring-shaped HslU homohexamer. The assembly of the HslU/HslV complex is dependent on binding of ATP.</text>
</comment>
<comment type="subcellular location">
    <subcellularLocation>
        <location evidence="1">Cytoplasm</location>
    </subcellularLocation>
</comment>
<comment type="similarity">
    <text evidence="1">Belongs to the peptidase T1B family. HslV subfamily.</text>
</comment>
<proteinExistence type="inferred from homology"/>
<sequence>MPENKIRSTTILCVRKSGKVAIGGDGQVSMGNTVMKNTAKKIRRLYDGKILSGFAGSAADAFTLFELFEKKVQEFGGSLSRSAVELAREWRTDRMLRKLEALLIVADKEESFLISGTGDVISPDEGVIAIGSGGSYALAAAKALYDHTDLSAREIVESSMKIAANICIYTNDHITLEEIL</sequence>
<evidence type="ECO:0000255" key="1">
    <source>
        <dbReference type="HAMAP-Rule" id="MF_00248"/>
    </source>
</evidence>
<protein>
    <recommendedName>
        <fullName evidence="1">ATP-dependent protease subunit HslV</fullName>
        <ecNumber evidence="1">3.4.25.2</ecNumber>
    </recommendedName>
</protein>
<feature type="chain" id="PRO_0000148117" description="ATP-dependent protease subunit HslV">
    <location>
        <begin position="1"/>
        <end position="180"/>
    </location>
</feature>
<feature type="active site" evidence="1">
    <location>
        <position position="9"/>
    </location>
</feature>
<feature type="binding site" evidence="1">
    <location>
        <position position="164"/>
    </location>
    <ligand>
        <name>Na(+)</name>
        <dbReference type="ChEBI" id="CHEBI:29101"/>
    </ligand>
</feature>
<feature type="binding site" evidence="1">
    <location>
        <position position="167"/>
    </location>
    <ligand>
        <name>Na(+)</name>
        <dbReference type="ChEBI" id="CHEBI:29101"/>
    </ligand>
</feature>
<feature type="binding site" evidence="1">
    <location>
        <position position="170"/>
    </location>
    <ligand>
        <name>Na(+)</name>
        <dbReference type="ChEBI" id="CHEBI:29101"/>
    </ligand>
</feature>